<protein>
    <recommendedName>
        <fullName>Cap-specific mRNA (nucleoside-2'-O-)-methyltransferase 1A</fullName>
        <ecNumber>2.1.1.57</ecNumber>
    </recommendedName>
    <alternativeName>
        <fullName>Cap1 2'O-ribose methyltransferase 1A</fullName>
        <shortName>MTr1A</shortName>
    </alternativeName>
</protein>
<gene>
    <name type="ORF">CBG20906</name>
</gene>
<sequence>MSERGDDDRTTSTINSLAKRRYQDNLDTFQEERAGFQQKRPHAVDDEDEDFETAAPPTKQKTKAEEMMERMGYKAGEGLGKNKQGIQEPVALSTQRGKTGLGHEGAKAVARDMNEQWDDSTENKTVEETVIWMTDIDEGIRREICDKLIKDDQWMVVRKEKKVIDDETEFCSEKELKDMIEAKNVFDSMSDKDLREARTRANPYETIGSAFFQNRAAMKTANMDKIYDWILSRENTGNNSFLLKNPLQEGTTAENVDRHEDLFYFADVCAGPGGFSEYMLWRKAFYNAKGFGFTLAGKDDFKLQKFTASSAYFFETFYGTKKNGDVMDPENIDSLEKFISEGTDGQGVHLMMADGGFSVEGQENIQEILSKRLYLCQLLVSLCIVREGGNFFCKLFDIFTPFSVGLIYLMRVCYDSISLHKPHTSRPANSERYITCKGLRKEFAGVVKDYLKRVNRKLDELKNKNSKDDVMELMPLDVIKSDEQFMKEIIEHNEVLAHRQTVYLQKYKSFAKNQGQFDKDQGNLRDECLKYWQVPNKQRPRGGDRGSRNGNQERLNPNVVLGKYTSKICGEAELGISFRGLGAASDPQLLIGTGDAVFIYRHGHFEQIDRDYARIPENTILLVDCAEEVKTDGSKIRISSDPHMIRIADAAVLYGDNVSQLPYEARMKAAQKFALALKLTKKTIQIGWGFRAKDITPHQVCCAQTYSLKELDEFQSNLIELKQRGEVIVLFKEGDRQFKTQSLRLTRIIKQDWQMGWSKSQQVPYVHSPLHQKEGSILEDQWKKREIHSSFWDSVILTNKDKQKMTEMMQHGHNAVPSTIWSWKPCMRTEYGPYKIMNHPEAFDGKPTISAIKSQIAETDLSTLRSKYTPLTAL</sequence>
<proteinExistence type="inferred from homology"/>
<feature type="chain" id="PRO_0000399807" description="Cap-specific mRNA (nucleoside-2'-O-)-methyltransferase 1A">
    <location>
        <begin position="1"/>
        <end position="874"/>
    </location>
</feature>
<feature type="domain" description="G-patch" evidence="2">
    <location>
        <begin position="60"/>
        <end position="106"/>
    </location>
</feature>
<feature type="domain" description="RrmJ-type SAM-dependent 2'-O-MTase" evidence="3">
    <location>
        <begin position="211"/>
        <end position="440"/>
    </location>
</feature>
<feature type="region of interest" description="Disordered" evidence="4">
    <location>
        <begin position="1"/>
        <end position="64"/>
    </location>
</feature>
<feature type="region of interest" description="Disordered" evidence="4">
    <location>
        <begin position="535"/>
        <end position="555"/>
    </location>
</feature>
<feature type="compositionally biased region" description="Basic and acidic residues" evidence="4">
    <location>
        <begin position="1"/>
        <end position="10"/>
    </location>
</feature>
<feature type="active site" description="Proton acceptor" evidence="3">
    <location>
        <position position="394"/>
    </location>
</feature>
<feature type="binding site" evidence="3">
    <location>
        <position position="273"/>
    </location>
    <ligand>
        <name>S-adenosyl-L-methionine</name>
        <dbReference type="ChEBI" id="CHEBI:59789"/>
    </ligand>
</feature>
<feature type="binding site" evidence="3">
    <location>
        <position position="354"/>
    </location>
    <ligand>
        <name>S-adenosyl-L-methionine</name>
        <dbReference type="ChEBI" id="CHEBI:59789"/>
    </ligand>
</feature>
<reference key="1">
    <citation type="journal article" date="2003" name="PLoS Biol.">
        <title>The genome sequence of Caenorhabditis briggsae: a platform for comparative genomics.</title>
        <authorList>
            <person name="Stein L.D."/>
            <person name="Bao Z."/>
            <person name="Blasiar D."/>
            <person name="Blumenthal T."/>
            <person name="Brent M.R."/>
            <person name="Chen N."/>
            <person name="Chinwalla A."/>
            <person name="Clarke L."/>
            <person name="Clee C."/>
            <person name="Coghlan A."/>
            <person name="Coulson A."/>
            <person name="D'Eustachio P."/>
            <person name="Fitch D.H.A."/>
            <person name="Fulton L.A."/>
            <person name="Fulton R.E."/>
            <person name="Griffiths-Jones S."/>
            <person name="Harris T.W."/>
            <person name="Hillier L.W."/>
            <person name="Kamath R."/>
            <person name="Kuwabara P.E."/>
            <person name="Mardis E.R."/>
            <person name="Marra M.A."/>
            <person name="Miner T.L."/>
            <person name="Minx P."/>
            <person name="Mullikin J.C."/>
            <person name="Plumb R.W."/>
            <person name="Rogers J."/>
            <person name="Schein J.E."/>
            <person name="Sohrmann M."/>
            <person name="Spieth J."/>
            <person name="Stajich J.E."/>
            <person name="Wei C."/>
            <person name="Willey D."/>
            <person name="Wilson R.K."/>
            <person name="Durbin R.M."/>
            <person name="Waterston R.H."/>
        </authorList>
    </citation>
    <scope>NUCLEOTIDE SEQUENCE [LARGE SCALE GENOMIC DNA]</scope>
    <source>
        <strain>AF16</strain>
    </source>
</reference>
<organism>
    <name type="scientific">Caenorhabditis briggsae</name>
    <dbReference type="NCBI Taxonomy" id="6238"/>
    <lineage>
        <taxon>Eukaryota</taxon>
        <taxon>Metazoa</taxon>
        <taxon>Ecdysozoa</taxon>
        <taxon>Nematoda</taxon>
        <taxon>Chromadorea</taxon>
        <taxon>Rhabditida</taxon>
        <taxon>Rhabditina</taxon>
        <taxon>Rhabditomorpha</taxon>
        <taxon>Rhabditoidea</taxon>
        <taxon>Rhabditidae</taxon>
        <taxon>Peloderinae</taxon>
        <taxon>Caenorhabditis</taxon>
    </lineage>
</organism>
<keyword id="KW-0489">Methyltransferase</keyword>
<keyword id="KW-0506">mRNA capping</keyword>
<keyword id="KW-0507">mRNA processing</keyword>
<keyword id="KW-1185">Reference proteome</keyword>
<keyword id="KW-0949">S-adenosyl-L-methionine</keyword>
<keyword id="KW-0808">Transferase</keyword>
<name>MTR1A_CAEBR</name>
<dbReference type="EC" id="2.1.1.57"/>
<dbReference type="EMBL" id="HE600928">
    <property type="protein sequence ID" value="CAP37839.2"/>
    <property type="molecule type" value="Genomic_DNA"/>
</dbReference>
<dbReference type="RefSeq" id="XP_045097168.1">
    <property type="nucleotide sequence ID" value="XM_045242754.1"/>
</dbReference>
<dbReference type="SMR" id="A8XYX2"/>
<dbReference type="FunCoup" id="A8XYX2">
    <property type="interactions" value="3014"/>
</dbReference>
<dbReference type="STRING" id="6238.A8XYX2"/>
<dbReference type="GeneID" id="8573705"/>
<dbReference type="WormBase" id="CBG20906">
    <property type="protein sequence ID" value="CBP45920"/>
    <property type="gene ID" value="WBGene00039810"/>
</dbReference>
<dbReference type="eggNOG" id="KOG3673">
    <property type="taxonomic scope" value="Eukaryota"/>
</dbReference>
<dbReference type="HOGENOM" id="CLU_011097_1_0_1"/>
<dbReference type="InParanoid" id="A8XYX2"/>
<dbReference type="OMA" id="FFYCRGM"/>
<dbReference type="Proteomes" id="UP000008549">
    <property type="component" value="Unassembled WGS sequence"/>
</dbReference>
<dbReference type="GO" id="GO:0005737">
    <property type="term" value="C:cytoplasm"/>
    <property type="evidence" value="ECO:0000318"/>
    <property type="project" value="GO_Central"/>
</dbReference>
<dbReference type="GO" id="GO:0005634">
    <property type="term" value="C:nucleus"/>
    <property type="evidence" value="ECO:0000250"/>
    <property type="project" value="UniProtKB"/>
</dbReference>
<dbReference type="GO" id="GO:0004483">
    <property type="term" value="F:mRNA (nucleoside-2'-O-)-methyltransferase activity"/>
    <property type="evidence" value="ECO:0000250"/>
    <property type="project" value="UniProtKB"/>
</dbReference>
<dbReference type="GO" id="GO:0003676">
    <property type="term" value="F:nucleic acid binding"/>
    <property type="evidence" value="ECO:0007669"/>
    <property type="project" value="InterPro"/>
</dbReference>
<dbReference type="GO" id="GO:0006370">
    <property type="term" value="P:7-methylguanosine mRNA capping"/>
    <property type="evidence" value="ECO:0000250"/>
    <property type="project" value="UniProtKB"/>
</dbReference>
<dbReference type="GO" id="GO:0032259">
    <property type="term" value="P:methylation"/>
    <property type="evidence" value="ECO:0007669"/>
    <property type="project" value="UniProtKB-KW"/>
</dbReference>
<dbReference type="GO" id="GO:0006397">
    <property type="term" value="P:mRNA processing"/>
    <property type="evidence" value="ECO:0000250"/>
    <property type="project" value="UniProtKB"/>
</dbReference>
<dbReference type="FunFam" id="3.40.50.12760:FF:000004">
    <property type="entry name" value="FtsJ-like methyltransferase"/>
    <property type="match status" value="1"/>
</dbReference>
<dbReference type="Gene3D" id="3.40.50.12760">
    <property type="match status" value="1"/>
</dbReference>
<dbReference type="InterPro" id="IPR000467">
    <property type="entry name" value="G_patch_dom"/>
</dbReference>
<dbReference type="InterPro" id="IPR050851">
    <property type="entry name" value="mRNA_Cap_2O-Ribose_MeTrfase"/>
</dbReference>
<dbReference type="InterPro" id="IPR002877">
    <property type="entry name" value="RNA_MeTrfase_FtsJ_dom"/>
</dbReference>
<dbReference type="InterPro" id="IPR025816">
    <property type="entry name" value="RrmJ-type_MeTrfase"/>
</dbReference>
<dbReference type="InterPro" id="IPR029063">
    <property type="entry name" value="SAM-dependent_MTases_sf"/>
</dbReference>
<dbReference type="PANTHER" id="PTHR16121:SF0">
    <property type="entry name" value="CAP-SPECIFIC MRNA (NUCLEOSIDE-2'-O-)-METHYLTRANSFERASE 1"/>
    <property type="match status" value="1"/>
</dbReference>
<dbReference type="PANTHER" id="PTHR16121">
    <property type="entry name" value="CAP-SPECIFIC MRNA (NUCLEOSIDE-2'-O-)-METHYLTRANSFERASE 1-RELATED"/>
    <property type="match status" value="1"/>
</dbReference>
<dbReference type="Pfam" id="PF01728">
    <property type="entry name" value="FtsJ"/>
    <property type="match status" value="1"/>
</dbReference>
<dbReference type="Pfam" id="PF01585">
    <property type="entry name" value="G-patch"/>
    <property type="match status" value="1"/>
</dbReference>
<dbReference type="SMART" id="SM00443">
    <property type="entry name" value="G_patch"/>
    <property type="match status" value="1"/>
</dbReference>
<dbReference type="SUPFAM" id="SSF53335">
    <property type="entry name" value="S-adenosyl-L-methionine-dependent methyltransferases"/>
    <property type="match status" value="1"/>
</dbReference>
<dbReference type="PROSITE" id="PS50174">
    <property type="entry name" value="G_PATCH"/>
    <property type="match status" value="1"/>
</dbReference>
<dbReference type="PROSITE" id="PS51613">
    <property type="entry name" value="SAM_MT_RRMJ"/>
    <property type="match status" value="1"/>
</dbReference>
<accession>A8XYX2</accession>
<comment type="function">
    <text evidence="1">S-adenosyl-L-methionine-dependent methyltransferase that mediates mRNA cap1 2'-O-ribose methylation to the 5'-cap structure of mRNAs. Methylates the ribose of the first nucleotide of a m(7)GpppG-capped mRNA to produce m(7)GpppNmp (cap1). Cap1 modification is linked to higher levels of translation.</text>
</comment>
<comment type="catalytic activity">
    <reaction>
        <text>a 5'-end (N(7)-methyl 5'-triphosphoguanosine)-ribonucleoside in mRNA + S-adenosyl-L-methionine = a 5'-end (N(7)-methyl 5'-triphosphoguanosine)-(2'-O-methyl-ribonucleoside) in mRNA + S-adenosyl-L-homocysteine + H(+)</text>
        <dbReference type="Rhea" id="RHEA:67020"/>
        <dbReference type="Rhea" id="RHEA-COMP:17167"/>
        <dbReference type="Rhea" id="RHEA-COMP:17168"/>
        <dbReference type="ChEBI" id="CHEBI:15378"/>
        <dbReference type="ChEBI" id="CHEBI:57856"/>
        <dbReference type="ChEBI" id="CHEBI:59789"/>
        <dbReference type="ChEBI" id="CHEBI:156461"/>
        <dbReference type="ChEBI" id="CHEBI:167609"/>
        <dbReference type="EC" id="2.1.1.57"/>
    </reaction>
</comment>
<evidence type="ECO:0000250" key="1"/>
<evidence type="ECO:0000255" key="2">
    <source>
        <dbReference type="PROSITE-ProRule" id="PRU00092"/>
    </source>
</evidence>
<evidence type="ECO:0000255" key="3">
    <source>
        <dbReference type="PROSITE-ProRule" id="PRU00945"/>
    </source>
</evidence>
<evidence type="ECO:0000256" key="4">
    <source>
        <dbReference type="SAM" id="MobiDB-lite"/>
    </source>
</evidence>